<comment type="similarity">
    <text evidence="1">Belongs to the bacterial ribosomal protein bL34 family.</text>
</comment>
<evidence type="ECO:0000255" key="1">
    <source>
        <dbReference type="HAMAP-Rule" id="MF_00391"/>
    </source>
</evidence>
<evidence type="ECO:0000305" key="2"/>
<dbReference type="EMBL" id="CP001001">
    <property type="protein sequence ID" value="ACB25482.1"/>
    <property type="molecule type" value="Genomic_DNA"/>
</dbReference>
<dbReference type="RefSeq" id="WP_007558110.1">
    <property type="nucleotide sequence ID" value="NC_010505.1"/>
</dbReference>
<dbReference type="SMR" id="B1LUP6"/>
<dbReference type="STRING" id="426355.Mrad2831_3505"/>
<dbReference type="GeneID" id="96606257"/>
<dbReference type="KEGG" id="mrd:Mrad2831_3505"/>
<dbReference type="eggNOG" id="COG0230">
    <property type="taxonomic scope" value="Bacteria"/>
</dbReference>
<dbReference type="HOGENOM" id="CLU_129938_2_0_5"/>
<dbReference type="OrthoDB" id="9804164at2"/>
<dbReference type="Proteomes" id="UP000006589">
    <property type="component" value="Chromosome"/>
</dbReference>
<dbReference type="GO" id="GO:1990904">
    <property type="term" value="C:ribonucleoprotein complex"/>
    <property type="evidence" value="ECO:0007669"/>
    <property type="project" value="UniProtKB-KW"/>
</dbReference>
<dbReference type="GO" id="GO:0005840">
    <property type="term" value="C:ribosome"/>
    <property type="evidence" value="ECO:0007669"/>
    <property type="project" value="UniProtKB-KW"/>
</dbReference>
<dbReference type="GO" id="GO:0003735">
    <property type="term" value="F:structural constituent of ribosome"/>
    <property type="evidence" value="ECO:0007669"/>
    <property type="project" value="InterPro"/>
</dbReference>
<dbReference type="GO" id="GO:0006412">
    <property type="term" value="P:translation"/>
    <property type="evidence" value="ECO:0007669"/>
    <property type="project" value="UniProtKB-UniRule"/>
</dbReference>
<dbReference type="FunFam" id="1.10.287.3980:FF:000001">
    <property type="entry name" value="Mitochondrial ribosomal protein L34"/>
    <property type="match status" value="1"/>
</dbReference>
<dbReference type="Gene3D" id="1.10.287.3980">
    <property type="match status" value="1"/>
</dbReference>
<dbReference type="HAMAP" id="MF_00391">
    <property type="entry name" value="Ribosomal_bL34"/>
    <property type="match status" value="1"/>
</dbReference>
<dbReference type="InterPro" id="IPR000271">
    <property type="entry name" value="Ribosomal_bL34"/>
</dbReference>
<dbReference type="InterPro" id="IPR020939">
    <property type="entry name" value="Ribosomal_bL34_CS"/>
</dbReference>
<dbReference type="NCBIfam" id="TIGR01030">
    <property type="entry name" value="rpmH_bact"/>
    <property type="match status" value="1"/>
</dbReference>
<dbReference type="PANTHER" id="PTHR14503:SF4">
    <property type="entry name" value="LARGE RIBOSOMAL SUBUNIT PROTEIN BL34M"/>
    <property type="match status" value="1"/>
</dbReference>
<dbReference type="PANTHER" id="PTHR14503">
    <property type="entry name" value="MITOCHONDRIAL RIBOSOMAL PROTEIN 34 FAMILY MEMBER"/>
    <property type="match status" value="1"/>
</dbReference>
<dbReference type="Pfam" id="PF00468">
    <property type="entry name" value="Ribosomal_L34"/>
    <property type="match status" value="1"/>
</dbReference>
<dbReference type="PROSITE" id="PS00784">
    <property type="entry name" value="RIBOSOMAL_L34"/>
    <property type="match status" value="1"/>
</dbReference>
<name>RL34_METRJ</name>
<feature type="chain" id="PRO_1000196068" description="Large ribosomal subunit protein bL34">
    <location>
        <begin position="1"/>
        <end position="44"/>
    </location>
</feature>
<proteinExistence type="inferred from homology"/>
<gene>
    <name evidence="1" type="primary">rpmH</name>
    <name type="ordered locus">Mrad2831_3505</name>
</gene>
<accession>B1LUP6</accession>
<organism>
    <name type="scientific">Methylobacterium radiotolerans (strain ATCC 27329 / DSM 1819 / JCM 2831 / NBRC 15690 / NCIMB 10815 / 0-1)</name>
    <dbReference type="NCBI Taxonomy" id="426355"/>
    <lineage>
        <taxon>Bacteria</taxon>
        <taxon>Pseudomonadati</taxon>
        <taxon>Pseudomonadota</taxon>
        <taxon>Alphaproteobacteria</taxon>
        <taxon>Hyphomicrobiales</taxon>
        <taxon>Methylobacteriaceae</taxon>
        <taxon>Methylobacterium</taxon>
    </lineage>
</organism>
<keyword id="KW-0687">Ribonucleoprotein</keyword>
<keyword id="KW-0689">Ribosomal protein</keyword>
<protein>
    <recommendedName>
        <fullName evidence="1">Large ribosomal subunit protein bL34</fullName>
    </recommendedName>
    <alternativeName>
        <fullName evidence="2">50S ribosomal protein L34</fullName>
    </alternativeName>
</protein>
<sequence length="44" mass="5174">MKRTYQPSKLVRKRRHGFRARMATAGGRKVIARRRAHGRKRLSA</sequence>
<reference key="1">
    <citation type="submission" date="2008-03" db="EMBL/GenBank/DDBJ databases">
        <title>Complete sequence of chromosome of Methylobacterium radiotolerans JCM 2831.</title>
        <authorList>
            <consortium name="US DOE Joint Genome Institute"/>
            <person name="Copeland A."/>
            <person name="Lucas S."/>
            <person name="Lapidus A."/>
            <person name="Glavina del Rio T."/>
            <person name="Dalin E."/>
            <person name="Tice H."/>
            <person name="Bruce D."/>
            <person name="Goodwin L."/>
            <person name="Pitluck S."/>
            <person name="Kiss H."/>
            <person name="Brettin T."/>
            <person name="Detter J.C."/>
            <person name="Han C."/>
            <person name="Kuske C.R."/>
            <person name="Schmutz J."/>
            <person name="Larimer F."/>
            <person name="Land M."/>
            <person name="Hauser L."/>
            <person name="Kyrpides N."/>
            <person name="Mikhailova N."/>
            <person name="Marx C.J."/>
            <person name="Richardson P."/>
        </authorList>
    </citation>
    <scope>NUCLEOTIDE SEQUENCE [LARGE SCALE GENOMIC DNA]</scope>
    <source>
        <strain>ATCC 27329 / DSM 1819 / JCM 2831 / NBRC 15690 / NCIMB 10815 / 0-1</strain>
    </source>
</reference>